<gene>
    <name evidence="1" type="primary">rplS</name>
    <name type="ordered locus">NWMN_1151</name>
</gene>
<reference key="1">
    <citation type="journal article" date="2008" name="J. Bacteriol.">
        <title>Genome sequence of Staphylococcus aureus strain Newman and comparative analysis of staphylococcal genomes: polymorphism and evolution of two major pathogenicity islands.</title>
        <authorList>
            <person name="Baba T."/>
            <person name="Bae T."/>
            <person name="Schneewind O."/>
            <person name="Takeuchi F."/>
            <person name="Hiramatsu K."/>
        </authorList>
    </citation>
    <scope>NUCLEOTIDE SEQUENCE [LARGE SCALE GENOMIC DNA]</scope>
    <source>
        <strain>Newman</strain>
    </source>
</reference>
<protein>
    <recommendedName>
        <fullName evidence="1">Large ribosomal subunit protein bL19</fullName>
    </recommendedName>
    <alternativeName>
        <fullName evidence="2">50S ribosomal protein L19</fullName>
    </alternativeName>
</protein>
<accession>A6QGE1</accession>
<keyword id="KW-0687">Ribonucleoprotein</keyword>
<keyword id="KW-0689">Ribosomal protein</keyword>
<comment type="function">
    <text evidence="1">This protein is located at the 30S-50S ribosomal subunit interface and may play a role in the structure and function of the aminoacyl-tRNA binding site.</text>
</comment>
<comment type="similarity">
    <text evidence="1">Belongs to the bacterial ribosomal protein bL19 family.</text>
</comment>
<dbReference type="EMBL" id="AP009351">
    <property type="protein sequence ID" value="BAF67423.1"/>
    <property type="molecule type" value="Genomic_DNA"/>
</dbReference>
<dbReference type="RefSeq" id="WP_000181404.1">
    <property type="nucleotide sequence ID" value="NZ_JBBIAE010000001.1"/>
</dbReference>
<dbReference type="SMR" id="A6QGE1"/>
<dbReference type="GeneID" id="98345556"/>
<dbReference type="KEGG" id="sae:NWMN_1151"/>
<dbReference type="HOGENOM" id="CLU_103507_2_1_9"/>
<dbReference type="Proteomes" id="UP000006386">
    <property type="component" value="Chromosome"/>
</dbReference>
<dbReference type="GO" id="GO:0022625">
    <property type="term" value="C:cytosolic large ribosomal subunit"/>
    <property type="evidence" value="ECO:0007669"/>
    <property type="project" value="TreeGrafter"/>
</dbReference>
<dbReference type="GO" id="GO:0003735">
    <property type="term" value="F:structural constituent of ribosome"/>
    <property type="evidence" value="ECO:0007669"/>
    <property type="project" value="InterPro"/>
</dbReference>
<dbReference type="GO" id="GO:0006412">
    <property type="term" value="P:translation"/>
    <property type="evidence" value="ECO:0007669"/>
    <property type="project" value="UniProtKB-UniRule"/>
</dbReference>
<dbReference type="FunFam" id="2.30.30.790:FF:000001">
    <property type="entry name" value="50S ribosomal protein L19"/>
    <property type="match status" value="1"/>
</dbReference>
<dbReference type="Gene3D" id="2.30.30.790">
    <property type="match status" value="1"/>
</dbReference>
<dbReference type="HAMAP" id="MF_00402">
    <property type="entry name" value="Ribosomal_bL19"/>
    <property type="match status" value="1"/>
</dbReference>
<dbReference type="InterPro" id="IPR001857">
    <property type="entry name" value="Ribosomal_bL19"/>
</dbReference>
<dbReference type="InterPro" id="IPR018257">
    <property type="entry name" value="Ribosomal_bL19_CS"/>
</dbReference>
<dbReference type="InterPro" id="IPR038657">
    <property type="entry name" value="Ribosomal_bL19_sf"/>
</dbReference>
<dbReference type="InterPro" id="IPR008991">
    <property type="entry name" value="Translation_prot_SH3-like_sf"/>
</dbReference>
<dbReference type="NCBIfam" id="TIGR01024">
    <property type="entry name" value="rplS_bact"/>
    <property type="match status" value="1"/>
</dbReference>
<dbReference type="PANTHER" id="PTHR15680:SF9">
    <property type="entry name" value="LARGE RIBOSOMAL SUBUNIT PROTEIN BL19M"/>
    <property type="match status" value="1"/>
</dbReference>
<dbReference type="PANTHER" id="PTHR15680">
    <property type="entry name" value="RIBOSOMAL PROTEIN L19"/>
    <property type="match status" value="1"/>
</dbReference>
<dbReference type="Pfam" id="PF01245">
    <property type="entry name" value="Ribosomal_L19"/>
    <property type="match status" value="1"/>
</dbReference>
<dbReference type="PIRSF" id="PIRSF002191">
    <property type="entry name" value="Ribosomal_L19"/>
    <property type="match status" value="1"/>
</dbReference>
<dbReference type="PRINTS" id="PR00061">
    <property type="entry name" value="RIBOSOMALL19"/>
</dbReference>
<dbReference type="SUPFAM" id="SSF50104">
    <property type="entry name" value="Translation proteins SH3-like domain"/>
    <property type="match status" value="1"/>
</dbReference>
<dbReference type="PROSITE" id="PS01015">
    <property type="entry name" value="RIBOSOMAL_L19"/>
    <property type="match status" value="1"/>
</dbReference>
<evidence type="ECO:0000255" key="1">
    <source>
        <dbReference type="HAMAP-Rule" id="MF_00402"/>
    </source>
</evidence>
<evidence type="ECO:0000305" key="2"/>
<name>RL19_STAAE</name>
<organism>
    <name type="scientific">Staphylococcus aureus (strain Newman)</name>
    <dbReference type="NCBI Taxonomy" id="426430"/>
    <lineage>
        <taxon>Bacteria</taxon>
        <taxon>Bacillati</taxon>
        <taxon>Bacillota</taxon>
        <taxon>Bacilli</taxon>
        <taxon>Bacillales</taxon>
        <taxon>Staphylococcaceae</taxon>
        <taxon>Staphylococcus</taxon>
    </lineage>
</organism>
<proteinExistence type="inferred from homology"/>
<sequence>MTNHKLIEAVTKSQLRTDLPSFRPGDTLRVHVRIIEGTRERIQVFEGVVIKRRGGGVSETFTVRKISSGVGVERTFPLHTPKIEKIEVKRRGKVRRAKLYYLRSLRGKAARIQEIR</sequence>
<feature type="chain" id="PRO_1000072250" description="Large ribosomal subunit protein bL19">
    <location>
        <begin position="1"/>
        <end position="116"/>
    </location>
</feature>